<feature type="chain" id="PRO_0000237003" description="Chaperone protein HtpG">
    <location>
        <begin position="1"/>
        <end position="628"/>
    </location>
</feature>
<feature type="region of interest" description="A; substrate-binding" evidence="1">
    <location>
        <begin position="1"/>
        <end position="340"/>
    </location>
</feature>
<feature type="region of interest" description="B" evidence="1">
    <location>
        <begin position="341"/>
        <end position="556"/>
    </location>
</feature>
<feature type="region of interest" description="C" evidence="1">
    <location>
        <begin position="557"/>
        <end position="628"/>
    </location>
</feature>
<dbReference type="EMBL" id="AP008232">
    <property type="protein sequence ID" value="BAE73967.1"/>
    <property type="status" value="ALT_INIT"/>
    <property type="molecule type" value="Genomic_DNA"/>
</dbReference>
<dbReference type="RefSeq" id="WP_162010790.1">
    <property type="nucleotide sequence ID" value="NC_007712.1"/>
</dbReference>
<dbReference type="SMR" id="Q2NV58"/>
<dbReference type="STRING" id="343509.SG0692"/>
<dbReference type="KEGG" id="sgl:SG0692"/>
<dbReference type="eggNOG" id="COG0326">
    <property type="taxonomic scope" value="Bacteria"/>
</dbReference>
<dbReference type="HOGENOM" id="CLU_006684_3_0_6"/>
<dbReference type="OrthoDB" id="9802640at2"/>
<dbReference type="Proteomes" id="UP000001932">
    <property type="component" value="Chromosome"/>
</dbReference>
<dbReference type="GO" id="GO:0005737">
    <property type="term" value="C:cytoplasm"/>
    <property type="evidence" value="ECO:0007669"/>
    <property type="project" value="UniProtKB-SubCell"/>
</dbReference>
<dbReference type="GO" id="GO:0005524">
    <property type="term" value="F:ATP binding"/>
    <property type="evidence" value="ECO:0007669"/>
    <property type="project" value="UniProtKB-UniRule"/>
</dbReference>
<dbReference type="GO" id="GO:0016887">
    <property type="term" value="F:ATP hydrolysis activity"/>
    <property type="evidence" value="ECO:0007669"/>
    <property type="project" value="InterPro"/>
</dbReference>
<dbReference type="GO" id="GO:0140662">
    <property type="term" value="F:ATP-dependent protein folding chaperone"/>
    <property type="evidence" value="ECO:0007669"/>
    <property type="project" value="InterPro"/>
</dbReference>
<dbReference type="GO" id="GO:0051082">
    <property type="term" value="F:unfolded protein binding"/>
    <property type="evidence" value="ECO:0007669"/>
    <property type="project" value="UniProtKB-UniRule"/>
</dbReference>
<dbReference type="CDD" id="cd16927">
    <property type="entry name" value="HATPase_Hsp90-like"/>
    <property type="match status" value="1"/>
</dbReference>
<dbReference type="FunFam" id="1.20.120.790:FF:000002">
    <property type="entry name" value="Molecular chaperone HtpG"/>
    <property type="match status" value="1"/>
</dbReference>
<dbReference type="FunFam" id="3.30.230.80:FF:000002">
    <property type="entry name" value="Molecular chaperone HtpG"/>
    <property type="match status" value="1"/>
</dbReference>
<dbReference type="FunFam" id="3.30.565.10:FF:000009">
    <property type="entry name" value="Molecular chaperone HtpG"/>
    <property type="match status" value="1"/>
</dbReference>
<dbReference type="FunFam" id="3.40.50.11260:FF:000002">
    <property type="entry name" value="Molecular chaperone HtpG"/>
    <property type="match status" value="1"/>
</dbReference>
<dbReference type="Gene3D" id="3.30.230.80">
    <property type="match status" value="1"/>
</dbReference>
<dbReference type="Gene3D" id="3.40.50.11260">
    <property type="match status" value="1"/>
</dbReference>
<dbReference type="Gene3D" id="1.20.120.790">
    <property type="entry name" value="Heat shock protein 90, C-terminal domain"/>
    <property type="match status" value="1"/>
</dbReference>
<dbReference type="Gene3D" id="3.30.565.10">
    <property type="entry name" value="Histidine kinase-like ATPase, C-terminal domain"/>
    <property type="match status" value="1"/>
</dbReference>
<dbReference type="HAMAP" id="MF_00505">
    <property type="entry name" value="HSP90"/>
    <property type="match status" value="1"/>
</dbReference>
<dbReference type="InterPro" id="IPR036890">
    <property type="entry name" value="HATPase_C_sf"/>
</dbReference>
<dbReference type="InterPro" id="IPR019805">
    <property type="entry name" value="Heat_shock_protein_90_CS"/>
</dbReference>
<dbReference type="InterPro" id="IPR037196">
    <property type="entry name" value="HSP90_C"/>
</dbReference>
<dbReference type="InterPro" id="IPR001404">
    <property type="entry name" value="Hsp90_fam"/>
</dbReference>
<dbReference type="InterPro" id="IPR020575">
    <property type="entry name" value="Hsp90_N"/>
</dbReference>
<dbReference type="InterPro" id="IPR020568">
    <property type="entry name" value="Ribosomal_Su5_D2-typ_SF"/>
</dbReference>
<dbReference type="NCBIfam" id="NF003555">
    <property type="entry name" value="PRK05218.1"/>
    <property type="match status" value="1"/>
</dbReference>
<dbReference type="PANTHER" id="PTHR11528">
    <property type="entry name" value="HEAT SHOCK PROTEIN 90 FAMILY MEMBER"/>
    <property type="match status" value="1"/>
</dbReference>
<dbReference type="Pfam" id="PF13589">
    <property type="entry name" value="HATPase_c_3"/>
    <property type="match status" value="1"/>
</dbReference>
<dbReference type="Pfam" id="PF00183">
    <property type="entry name" value="HSP90"/>
    <property type="match status" value="1"/>
</dbReference>
<dbReference type="PIRSF" id="PIRSF002583">
    <property type="entry name" value="Hsp90"/>
    <property type="match status" value="1"/>
</dbReference>
<dbReference type="PRINTS" id="PR00775">
    <property type="entry name" value="HEATSHOCK90"/>
</dbReference>
<dbReference type="SMART" id="SM00387">
    <property type="entry name" value="HATPase_c"/>
    <property type="match status" value="1"/>
</dbReference>
<dbReference type="SUPFAM" id="SSF55874">
    <property type="entry name" value="ATPase domain of HSP90 chaperone/DNA topoisomerase II/histidine kinase"/>
    <property type="match status" value="1"/>
</dbReference>
<dbReference type="SUPFAM" id="SSF110942">
    <property type="entry name" value="HSP90 C-terminal domain"/>
    <property type="match status" value="1"/>
</dbReference>
<dbReference type="SUPFAM" id="SSF54211">
    <property type="entry name" value="Ribosomal protein S5 domain 2-like"/>
    <property type="match status" value="1"/>
</dbReference>
<dbReference type="PROSITE" id="PS00298">
    <property type="entry name" value="HSP90"/>
    <property type="match status" value="1"/>
</dbReference>
<protein>
    <recommendedName>
        <fullName evidence="1">Chaperone protein HtpG</fullName>
    </recommendedName>
    <alternativeName>
        <fullName evidence="1">Heat shock protein HtpG</fullName>
    </alternativeName>
    <alternativeName>
        <fullName evidence="1">High temperature protein G</fullName>
    </alternativeName>
</protein>
<evidence type="ECO:0000255" key="1">
    <source>
        <dbReference type="HAMAP-Rule" id="MF_00505"/>
    </source>
</evidence>
<evidence type="ECO:0000305" key="2"/>
<keyword id="KW-0067">ATP-binding</keyword>
<keyword id="KW-0143">Chaperone</keyword>
<keyword id="KW-0963">Cytoplasm</keyword>
<keyword id="KW-0547">Nucleotide-binding</keyword>
<keyword id="KW-0346">Stress response</keyword>
<reference key="1">
    <citation type="journal article" date="2006" name="Genome Res.">
        <title>Massive genome erosion and functional adaptations provide insights into the symbiotic lifestyle of Sodalis glossinidius in the tsetse host.</title>
        <authorList>
            <person name="Toh H."/>
            <person name="Weiss B.L."/>
            <person name="Perkin S.A.H."/>
            <person name="Yamashita A."/>
            <person name="Oshima K."/>
            <person name="Hattori M."/>
            <person name="Aksoy S."/>
        </authorList>
    </citation>
    <scope>NUCLEOTIDE SEQUENCE [LARGE SCALE GENOMIC DNA]</scope>
    <source>
        <strain>morsitans</strain>
    </source>
</reference>
<proteinExistence type="inferred from homology"/>
<accession>Q2NV58</accession>
<comment type="function">
    <text evidence="1">Molecular chaperone. Has ATPase activity.</text>
</comment>
<comment type="subunit">
    <text evidence="1">Homodimer.</text>
</comment>
<comment type="subcellular location">
    <subcellularLocation>
        <location evidence="1">Cytoplasm</location>
    </subcellularLocation>
</comment>
<comment type="similarity">
    <text evidence="1">Belongs to the heat shock protein 90 family.</text>
</comment>
<comment type="sequence caution" evidence="2">
    <conflict type="erroneous initiation">
        <sequence resource="EMBL-CDS" id="BAE73967"/>
    </conflict>
</comment>
<name>HTPG_SODGM</name>
<organism>
    <name type="scientific">Sodalis glossinidius (strain morsitans)</name>
    <dbReference type="NCBI Taxonomy" id="343509"/>
    <lineage>
        <taxon>Bacteria</taxon>
        <taxon>Pseudomonadati</taxon>
        <taxon>Pseudomonadota</taxon>
        <taxon>Gammaproteobacteria</taxon>
        <taxon>Enterobacterales</taxon>
        <taxon>Bruguierivoracaceae</taxon>
        <taxon>Sodalis</taxon>
    </lineage>
</organism>
<gene>
    <name evidence="1" type="primary">htpG</name>
    <name type="ordered locus">SG0692</name>
</gene>
<sequence length="628" mass="71248">MKGQETRGFQSEVKQLLHLMIHSLYSNKEIFLRELISNASDAADKLRFRALSQPDLYEGDGELRVRLSCDKEKRTLTFSDNGIGMRREEVIDNLGTIAKSGTKAFLESMGSDQLKDSQLIGQFGVGFYSAFIVADKVTVRTRAAGAKPDGGVFWESAGEGDYTIADITKPERGTEITLHLREGEDDFLDDWRLKSVIGKYSDHIVLPVEIETRSKSEEEGSDEEVVTWEKINKAQALWTRNKADISDDEYKEFYKHLSHDFSEPLSWSHNRVEGKQEYTSLLYIPAKAPWDMWNREHKHGLKLYVQRVFIMDDAEQFMPNYLRFVKGLIDSNDLPLNVSREILQDSRVTQNLKGALTKRALSMLEKLAKDDAQQYQSFWQEFGLVLKEGAGEDPTNGEAVAKLLRFASTHGDSPAQTVSLEEYVGRMVEGQEKIYYITADSYAAAKSSPHLELLRKKGIEVLLFSDRIDEWMMSYLTEFDGKAFQSVSKADPSLDKLADEEDEEQKEVEKALEPFVERVKTYLGERVKEVRLTHRLTDTPAVVTTDADDMTTQMAKLFAAAGQAAPEIKYIFELNPDHALVKRTANLGDDGAFGDWVELLLDQALLAERGTLDDPNQFIRRMNQLLNA</sequence>